<keyword id="KW-0963">Cytoplasm</keyword>
<keyword id="KW-0413">Isomerase</keyword>
<keyword id="KW-0464">Manganese</keyword>
<keyword id="KW-0479">Metal-binding</keyword>
<name>DEOB_HELPJ</name>
<gene>
    <name evidence="1" type="primary">deoB</name>
    <name type="ordered locus">jhp_1105</name>
</gene>
<proteinExistence type="inferred from homology"/>
<protein>
    <recommendedName>
        <fullName evidence="1">Phosphopentomutase</fullName>
        <ecNumber evidence="1">5.4.2.7</ecNumber>
    </recommendedName>
    <alternativeName>
        <fullName evidence="1">Phosphodeoxyribomutase</fullName>
    </alternativeName>
</protein>
<evidence type="ECO:0000255" key="1">
    <source>
        <dbReference type="HAMAP-Rule" id="MF_00740"/>
    </source>
</evidence>
<comment type="function">
    <text evidence="1">Isomerase that catalyzes the conversion of deoxy-ribose 1-phosphate (dRib-1-P) and ribose 1-phosphate (Rib-1-P) to deoxy-ribose 5-phosphate (dRib-5-P) and ribose 5-phosphate (Rib-5-P), respectively.</text>
</comment>
<comment type="catalytic activity">
    <reaction evidence="1">
        <text>2-deoxy-alpha-D-ribose 1-phosphate = 2-deoxy-D-ribose 5-phosphate</text>
        <dbReference type="Rhea" id="RHEA:27658"/>
        <dbReference type="ChEBI" id="CHEBI:57259"/>
        <dbReference type="ChEBI" id="CHEBI:62877"/>
        <dbReference type="EC" id="5.4.2.7"/>
    </reaction>
</comment>
<comment type="catalytic activity">
    <reaction evidence="1">
        <text>alpha-D-ribose 1-phosphate = D-ribose 5-phosphate</text>
        <dbReference type="Rhea" id="RHEA:18793"/>
        <dbReference type="ChEBI" id="CHEBI:57720"/>
        <dbReference type="ChEBI" id="CHEBI:78346"/>
        <dbReference type="EC" id="5.4.2.7"/>
    </reaction>
</comment>
<comment type="cofactor">
    <cofactor evidence="1">
        <name>Mn(2+)</name>
        <dbReference type="ChEBI" id="CHEBI:29035"/>
    </cofactor>
    <text evidence="1">Binds 2 manganese ions.</text>
</comment>
<comment type="pathway">
    <text evidence="1">Carbohydrate degradation; 2-deoxy-D-ribose 1-phosphate degradation; D-glyceraldehyde 3-phosphate and acetaldehyde from 2-deoxy-alpha-D-ribose 1-phosphate: step 1/2.</text>
</comment>
<comment type="subcellular location">
    <subcellularLocation>
        <location evidence="1">Cytoplasm</location>
    </subcellularLocation>
</comment>
<comment type="similarity">
    <text evidence="1">Belongs to the phosphopentomutase family.</text>
</comment>
<accession>Q9ZK37</accession>
<feature type="chain" id="PRO_0000199823" description="Phosphopentomutase">
    <location>
        <begin position="1"/>
        <end position="413"/>
    </location>
</feature>
<feature type="binding site" evidence="1">
    <location>
        <position position="11"/>
    </location>
    <ligand>
        <name>Mn(2+)</name>
        <dbReference type="ChEBI" id="CHEBI:29035"/>
        <label>1</label>
    </ligand>
</feature>
<feature type="binding site" evidence="1">
    <location>
        <position position="306"/>
    </location>
    <ligand>
        <name>Mn(2+)</name>
        <dbReference type="ChEBI" id="CHEBI:29035"/>
        <label>2</label>
    </ligand>
</feature>
<feature type="binding site" evidence="1">
    <location>
        <position position="311"/>
    </location>
    <ligand>
        <name>Mn(2+)</name>
        <dbReference type="ChEBI" id="CHEBI:29035"/>
        <label>2</label>
    </ligand>
</feature>
<feature type="binding site" evidence="1">
    <location>
        <position position="347"/>
    </location>
    <ligand>
        <name>Mn(2+)</name>
        <dbReference type="ChEBI" id="CHEBI:29035"/>
        <label>1</label>
    </ligand>
</feature>
<feature type="binding site" evidence="1">
    <location>
        <position position="348"/>
    </location>
    <ligand>
        <name>Mn(2+)</name>
        <dbReference type="ChEBI" id="CHEBI:29035"/>
        <label>1</label>
    </ligand>
</feature>
<feature type="binding site" evidence="1">
    <location>
        <position position="359"/>
    </location>
    <ligand>
        <name>Mn(2+)</name>
        <dbReference type="ChEBI" id="CHEBI:29035"/>
        <label>2</label>
    </ligand>
</feature>
<dbReference type="EC" id="5.4.2.7" evidence="1"/>
<dbReference type="EMBL" id="AE001439">
    <property type="protein sequence ID" value="AAD06685.1"/>
    <property type="molecule type" value="Genomic_DNA"/>
</dbReference>
<dbReference type="PIR" id="D71848">
    <property type="entry name" value="D71848"/>
</dbReference>
<dbReference type="RefSeq" id="WP_001172175.1">
    <property type="nucleotide sequence ID" value="NC_000921.1"/>
</dbReference>
<dbReference type="SMR" id="Q9ZK37"/>
<dbReference type="KEGG" id="hpj:jhp_1105"/>
<dbReference type="PATRIC" id="fig|85963.30.peg.1474"/>
<dbReference type="eggNOG" id="COG1015">
    <property type="taxonomic scope" value="Bacteria"/>
</dbReference>
<dbReference type="UniPathway" id="UPA00002">
    <property type="reaction ID" value="UER00467"/>
</dbReference>
<dbReference type="Proteomes" id="UP000000804">
    <property type="component" value="Chromosome"/>
</dbReference>
<dbReference type="GO" id="GO:0005829">
    <property type="term" value="C:cytosol"/>
    <property type="evidence" value="ECO:0007669"/>
    <property type="project" value="TreeGrafter"/>
</dbReference>
<dbReference type="GO" id="GO:0000287">
    <property type="term" value="F:magnesium ion binding"/>
    <property type="evidence" value="ECO:0007669"/>
    <property type="project" value="InterPro"/>
</dbReference>
<dbReference type="GO" id="GO:0030145">
    <property type="term" value="F:manganese ion binding"/>
    <property type="evidence" value="ECO:0007669"/>
    <property type="project" value="UniProtKB-UniRule"/>
</dbReference>
<dbReference type="GO" id="GO:0008973">
    <property type="term" value="F:phosphopentomutase activity"/>
    <property type="evidence" value="ECO:0007669"/>
    <property type="project" value="UniProtKB-UniRule"/>
</dbReference>
<dbReference type="GO" id="GO:0006018">
    <property type="term" value="P:2-deoxyribose 1-phosphate catabolic process"/>
    <property type="evidence" value="ECO:0007669"/>
    <property type="project" value="UniProtKB-UniRule"/>
</dbReference>
<dbReference type="GO" id="GO:0006015">
    <property type="term" value="P:5-phosphoribose 1-diphosphate biosynthetic process"/>
    <property type="evidence" value="ECO:0007669"/>
    <property type="project" value="UniProtKB-UniPathway"/>
</dbReference>
<dbReference type="GO" id="GO:0043094">
    <property type="term" value="P:metabolic compound salvage"/>
    <property type="evidence" value="ECO:0007669"/>
    <property type="project" value="InterPro"/>
</dbReference>
<dbReference type="GO" id="GO:0009117">
    <property type="term" value="P:nucleotide metabolic process"/>
    <property type="evidence" value="ECO:0007669"/>
    <property type="project" value="InterPro"/>
</dbReference>
<dbReference type="CDD" id="cd16009">
    <property type="entry name" value="PPM"/>
    <property type="match status" value="1"/>
</dbReference>
<dbReference type="FunFam" id="3.30.70.1250:FF:000001">
    <property type="entry name" value="Phosphopentomutase"/>
    <property type="match status" value="1"/>
</dbReference>
<dbReference type="Gene3D" id="3.40.720.10">
    <property type="entry name" value="Alkaline Phosphatase, subunit A"/>
    <property type="match status" value="1"/>
</dbReference>
<dbReference type="Gene3D" id="3.30.70.1250">
    <property type="entry name" value="Phosphopentomutase"/>
    <property type="match status" value="1"/>
</dbReference>
<dbReference type="HAMAP" id="MF_00740">
    <property type="entry name" value="Phosphopentomut"/>
    <property type="match status" value="1"/>
</dbReference>
<dbReference type="InterPro" id="IPR017850">
    <property type="entry name" value="Alkaline_phosphatase_core_sf"/>
</dbReference>
<dbReference type="InterPro" id="IPR010045">
    <property type="entry name" value="DeoB"/>
</dbReference>
<dbReference type="InterPro" id="IPR006124">
    <property type="entry name" value="Metalloenzyme"/>
</dbReference>
<dbReference type="InterPro" id="IPR024052">
    <property type="entry name" value="Phosphopentomutase_DeoB_cap_sf"/>
</dbReference>
<dbReference type="NCBIfam" id="TIGR01696">
    <property type="entry name" value="deoB"/>
    <property type="match status" value="1"/>
</dbReference>
<dbReference type="NCBIfam" id="NF003766">
    <property type="entry name" value="PRK05362.1"/>
    <property type="match status" value="1"/>
</dbReference>
<dbReference type="PANTHER" id="PTHR21110">
    <property type="entry name" value="PHOSPHOPENTOMUTASE"/>
    <property type="match status" value="1"/>
</dbReference>
<dbReference type="PANTHER" id="PTHR21110:SF0">
    <property type="entry name" value="PHOSPHOPENTOMUTASE"/>
    <property type="match status" value="1"/>
</dbReference>
<dbReference type="Pfam" id="PF01676">
    <property type="entry name" value="Metalloenzyme"/>
    <property type="match status" value="1"/>
</dbReference>
<dbReference type="PIRSF" id="PIRSF001491">
    <property type="entry name" value="Ppentomutase"/>
    <property type="match status" value="1"/>
</dbReference>
<dbReference type="SUPFAM" id="SSF53649">
    <property type="entry name" value="Alkaline phosphatase-like"/>
    <property type="match status" value="1"/>
</dbReference>
<dbReference type="SUPFAM" id="SSF143856">
    <property type="entry name" value="DeoB insert domain-like"/>
    <property type="match status" value="1"/>
</dbReference>
<organism>
    <name type="scientific">Helicobacter pylori (strain J99 / ATCC 700824)</name>
    <name type="common">Campylobacter pylori J99</name>
    <dbReference type="NCBI Taxonomy" id="85963"/>
    <lineage>
        <taxon>Bacteria</taxon>
        <taxon>Pseudomonadati</taxon>
        <taxon>Campylobacterota</taxon>
        <taxon>Epsilonproteobacteria</taxon>
        <taxon>Campylobacterales</taxon>
        <taxon>Helicobacteraceae</taxon>
        <taxon>Helicobacter</taxon>
    </lineage>
</organism>
<reference key="1">
    <citation type="journal article" date="1999" name="Nature">
        <title>Genomic sequence comparison of two unrelated isolates of the human gastric pathogen Helicobacter pylori.</title>
        <authorList>
            <person name="Alm R.A."/>
            <person name="Ling L.-S.L."/>
            <person name="Moir D.T."/>
            <person name="King B.L."/>
            <person name="Brown E.D."/>
            <person name="Doig P.C."/>
            <person name="Smith D.R."/>
            <person name="Noonan B."/>
            <person name="Guild B.C."/>
            <person name="deJonge B.L."/>
            <person name="Carmel G."/>
            <person name="Tummino P.J."/>
            <person name="Caruso A."/>
            <person name="Uria-Nickelsen M."/>
            <person name="Mills D.M."/>
            <person name="Ives C."/>
            <person name="Gibson R."/>
            <person name="Merberg D."/>
            <person name="Mills S.D."/>
            <person name="Jiang Q."/>
            <person name="Taylor D.E."/>
            <person name="Vovis G.F."/>
            <person name="Trust T.J."/>
        </authorList>
    </citation>
    <scope>NUCLEOTIDE SEQUENCE [LARGE SCALE GENOMIC DNA]</scope>
    <source>
        <strain>J99 / ATCC 700824</strain>
    </source>
</reference>
<sequence length="413" mass="46175">MQKRVVILLLDSFGIGASEDAKDFGDLGANTLGNIAKACFNNLADSNDRNGVLKLPNLEGLGLGLSALKAANELPLGFQLKPNLIGAYAYAKELSSAKDTISGHWEMMGAPVLFEWGYFKDKNDSFPKEILDEIMHKTKIKGYLGNCHASGTEIIKDLGEKHLETLYPIFYTSADSVFQIAAHEERFGLDHLYALCEEAFQILEPLKIARVIARPFIGTNRENFKRTANRKDYAIKPHKKLLFETFIEEKQGEVISIGKIADIYAHVGITQKFKAGSLMELCDVTLDQVKNAPNNSLIFTNFVHFDSDYGHRRDVSGYANALEYFDARLKEVLDNLRENDLLILCADHGCDPSFKGTDHTREYIPVLFYHKDLQPAFLGKSETFADIGQSIAYFLGLSPLDYGKNLLNFKGQP</sequence>